<comment type="function">
    <text evidence="1">Catalyzes the methylthiolation of N6-threonylcarbamoyladenosine (t(6)A), leading to the formation of 2-methylthio-N6-threonylcarbamoyladenosine (ms(2)t(6)A) at position 37 in tRNAs that read codons beginning with adenine.</text>
</comment>
<comment type="catalytic activity">
    <reaction evidence="1">
        <text>N(6)-L-threonylcarbamoyladenosine(37) in tRNA + (sulfur carrier)-SH + AH2 + 2 S-adenosyl-L-methionine = 2-methylsulfanyl-N(6)-L-threonylcarbamoyladenosine(37) in tRNA + (sulfur carrier)-H + 5'-deoxyadenosine + L-methionine + A + S-adenosyl-L-homocysteine + 2 H(+)</text>
        <dbReference type="Rhea" id="RHEA:37075"/>
        <dbReference type="Rhea" id="RHEA-COMP:10163"/>
        <dbReference type="Rhea" id="RHEA-COMP:11092"/>
        <dbReference type="Rhea" id="RHEA-COMP:14737"/>
        <dbReference type="Rhea" id="RHEA-COMP:14739"/>
        <dbReference type="ChEBI" id="CHEBI:13193"/>
        <dbReference type="ChEBI" id="CHEBI:15378"/>
        <dbReference type="ChEBI" id="CHEBI:17319"/>
        <dbReference type="ChEBI" id="CHEBI:17499"/>
        <dbReference type="ChEBI" id="CHEBI:29917"/>
        <dbReference type="ChEBI" id="CHEBI:57844"/>
        <dbReference type="ChEBI" id="CHEBI:57856"/>
        <dbReference type="ChEBI" id="CHEBI:59789"/>
        <dbReference type="ChEBI" id="CHEBI:64428"/>
        <dbReference type="ChEBI" id="CHEBI:74418"/>
        <dbReference type="ChEBI" id="CHEBI:74420"/>
        <dbReference type="EC" id="2.8.4.5"/>
    </reaction>
</comment>
<comment type="cofactor">
    <cofactor evidence="2">
        <name>[4Fe-4S] cluster</name>
        <dbReference type="ChEBI" id="CHEBI:49883"/>
    </cofactor>
    <text evidence="2">Binds 2 [4Fe-4S] clusters. One cluster is coordinated with 3 cysteines and an exchangeable S-adenosyl-L-methionine.</text>
</comment>
<comment type="subcellular location">
    <subcellularLocation>
        <location evidence="2">Cytoplasm</location>
    </subcellularLocation>
</comment>
<comment type="similarity">
    <text evidence="4">Belongs to the methylthiotransferase family. MtaB subfamily.</text>
</comment>
<gene>
    <name type="primary">mtaB</name>
    <name type="ordered locus">aq_474</name>
</gene>
<feature type="chain" id="PRO_0000141726" description="Threonylcarbamoyladenosine tRNA methylthiotransferase MtaB">
    <location>
        <begin position="1"/>
        <end position="410"/>
    </location>
</feature>
<feature type="domain" description="MTTase N-terminal" evidence="2">
    <location>
        <begin position="1"/>
        <end position="113"/>
    </location>
</feature>
<feature type="domain" description="Radical SAM core" evidence="3">
    <location>
        <begin position="138"/>
        <end position="366"/>
    </location>
</feature>
<feature type="binding site" evidence="2">
    <location>
        <position position="10"/>
    </location>
    <ligand>
        <name>[4Fe-4S] cluster</name>
        <dbReference type="ChEBI" id="CHEBI:49883"/>
        <label>1</label>
    </ligand>
</feature>
<feature type="binding site" evidence="2">
    <location>
        <position position="46"/>
    </location>
    <ligand>
        <name>[4Fe-4S] cluster</name>
        <dbReference type="ChEBI" id="CHEBI:49883"/>
        <label>1</label>
    </ligand>
</feature>
<feature type="binding site" evidence="2">
    <location>
        <position position="77"/>
    </location>
    <ligand>
        <name>[4Fe-4S] cluster</name>
        <dbReference type="ChEBI" id="CHEBI:49883"/>
        <label>1</label>
    </ligand>
</feature>
<feature type="binding site" evidence="2">
    <location>
        <position position="152"/>
    </location>
    <ligand>
        <name>[4Fe-4S] cluster</name>
        <dbReference type="ChEBI" id="CHEBI:49883"/>
        <label>2</label>
        <note>4Fe-4S-S-AdoMet</note>
    </ligand>
</feature>
<feature type="binding site" evidence="2">
    <location>
        <position position="156"/>
    </location>
    <ligand>
        <name>[4Fe-4S] cluster</name>
        <dbReference type="ChEBI" id="CHEBI:49883"/>
        <label>2</label>
        <note>4Fe-4S-S-AdoMet</note>
    </ligand>
</feature>
<feature type="binding site" evidence="2">
    <location>
        <position position="159"/>
    </location>
    <ligand>
        <name>[4Fe-4S] cluster</name>
        <dbReference type="ChEBI" id="CHEBI:49883"/>
        <label>2</label>
        <note>4Fe-4S-S-AdoMet</note>
    </ligand>
</feature>
<sequence length="410" mass="47834">MKVAFETLGCRMNQFDTDLLKNKFIQKGYEVVSFEDMADVYVINTCTVTVGGDRSSRQAIYQAKRRNPKAIVVATGCYAQVNPQELAKLKEVDLVVGNTHKSELLKILEEYLERREKKVVVGEIFREKEVRNFDTVLYFEGVRPFLKVQEGCNKFCTFCVIPYARGKVRSVDLEKIVHQVKLLAQKGFKEVVLTGTQLSQYGWDKGYNLYTLLTELIKIEGIELIRLSSMHIKEMDKELLKLIVSEEKIAPHFHLSLQSGSNRILELMDRGYTREEYEEVVNFIVENRPISSIGTDVIVGFPTESEEDFQETYEFLKRIPISYMHIFPYSDRPFTKASKLKPKLPERIKKERVRILKELDQKKRQEFYEKNKGKELRALVIEENRLLTENYIDIKREGYKEVGKLVRVLI</sequence>
<reference key="1">
    <citation type="journal article" date="1998" name="Nature">
        <title>The complete genome of the hyperthermophilic bacterium Aquifex aeolicus.</title>
        <authorList>
            <person name="Deckert G."/>
            <person name="Warren P.V."/>
            <person name="Gaasterland T."/>
            <person name="Young W.G."/>
            <person name="Lenox A.L."/>
            <person name="Graham D.E."/>
            <person name="Overbeek R."/>
            <person name="Snead M.A."/>
            <person name="Keller M."/>
            <person name="Aujay M."/>
            <person name="Huber R."/>
            <person name="Feldman R.A."/>
            <person name="Short J.M."/>
            <person name="Olsen G.J."/>
            <person name="Swanson R.V."/>
        </authorList>
    </citation>
    <scope>NUCLEOTIDE SEQUENCE [LARGE SCALE GENOMIC DNA]</scope>
    <source>
        <strain>VF5</strain>
    </source>
</reference>
<evidence type="ECO:0000250" key="1">
    <source>
        <dbReference type="UniProtKB" id="P54462"/>
    </source>
</evidence>
<evidence type="ECO:0000255" key="2">
    <source>
        <dbReference type="PROSITE-ProRule" id="PRU00780"/>
    </source>
</evidence>
<evidence type="ECO:0000255" key="3">
    <source>
        <dbReference type="PROSITE-ProRule" id="PRU01266"/>
    </source>
</evidence>
<evidence type="ECO:0000305" key="4"/>
<dbReference type="EC" id="2.8.4.5"/>
<dbReference type="EMBL" id="AE000657">
    <property type="protein sequence ID" value="AAC06733.1"/>
    <property type="molecule type" value="Genomic_DNA"/>
</dbReference>
<dbReference type="PIR" id="H70342">
    <property type="entry name" value="H70342"/>
</dbReference>
<dbReference type="RefSeq" id="NP_213332.1">
    <property type="nucleotide sequence ID" value="NC_000918.1"/>
</dbReference>
<dbReference type="RefSeq" id="WP_010880270.1">
    <property type="nucleotide sequence ID" value="NC_000918.1"/>
</dbReference>
<dbReference type="SMR" id="O66772"/>
<dbReference type="STRING" id="224324.aq_474"/>
<dbReference type="EnsemblBacteria" id="AAC06733">
    <property type="protein sequence ID" value="AAC06733"/>
    <property type="gene ID" value="aq_474"/>
</dbReference>
<dbReference type="KEGG" id="aae:aq_474"/>
<dbReference type="PATRIC" id="fig|224324.8.peg.389"/>
<dbReference type="eggNOG" id="COG0621">
    <property type="taxonomic scope" value="Bacteria"/>
</dbReference>
<dbReference type="HOGENOM" id="CLU_018697_1_0_0"/>
<dbReference type="InParanoid" id="O66772"/>
<dbReference type="OrthoDB" id="9805215at2"/>
<dbReference type="Proteomes" id="UP000000798">
    <property type="component" value="Chromosome"/>
</dbReference>
<dbReference type="GO" id="GO:0005737">
    <property type="term" value="C:cytoplasm"/>
    <property type="evidence" value="ECO:0007669"/>
    <property type="project" value="UniProtKB-SubCell"/>
</dbReference>
<dbReference type="GO" id="GO:0051539">
    <property type="term" value="F:4 iron, 4 sulfur cluster binding"/>
    <property type="evidence" value="ECO:0007669"/>
    <property type="project" value="UniProtKB-KW"/>
</dbReference>
<dbReference type="GO" id="GO:0046872">
    <property type="term" value="F:metal ion binding"/>
    <property type="evidence" value="ECO:0007669"/>
    <property type="project" value="UniProtKB-KW"/>
</dbReference>
<dbReference type="GO" id="GO:0035598">
    <property type="term" value="F:N6-threonylcarbomyladenosine methylthiotransferase activity"/>
    <property type="evidence" value="ECO:0000318"/>
    <property type="project" value="GO_Central"/>
</dbReference>
<dbReference type="GO" id="GO:0061712">
    <property type="term" value="F:tRNA (N(6)-L-threonylcarbamoyladenosine(37)-C(2))-methylthiotransferase"/>
    <property type="evidence" value="ECO:0007669"/>
    <property type="project" value="UniProtKB-EC"/>
</dbReference>
<dbReference type="GO" id="GO:0035600">
    <property type="term" value="P:tRNA methylthiolation"/>
    <property type="evidence" value="ECO:0000318"/>
    <property type="project" value="GO_Central"/>
</dbReference>
<dbReference type="CDD" id="cd01335">
    <property type="entry name" value="Radical_SAM"/>
    <property type="match status" value="1"/>
</dbReference>
<dbReference type="FunFam" id="3.40.50.12160:FF:000004">
    <property type="entry name" value="Threonylcarbamoyladenosine tRNA methylthiotransferase MtaB"/>
    <property type="match status" value="1"/>
</dbReference>
<dbReference type="FunFam" id="3.80.30.20:FF:000001">
    <property type="entry name" value="tRNA-2-methylthio-N(6)-dimethylallyladenosine synthase 2"/>
    <property type="match status" value="1"/>
</dbReference>
<dbReference type="Gene3D" id="3.40.50.12160">
    <property type="entry name" value="Methylthiotransferase, N-terminal domain"/>
    <property type="match status" value="1"/>
</dbReference>
<dbReference type="Gene3D" id="3.80.30.20">
    <property type="entry name" value="tm_1862 like domain"/>
    <property type="match status" value="1"/>
</dbReference>
<dbReference type="InterPro" id="IPR006638">
    <property type="entry name" value="Elp3/MiaA/NifB-like_rSAM"/>
</dbReference>
<dbReference type="InterPro" id="IPR005839">
    <property type="entry name" value="Methylthiotransferase"/>
</dbReference>
<dbReference type="InterPro" id="IPR020612">
    <property type="entry name" value="Methylthiotransferase_CS"/>
</dbReference>
<dbReference type="InterPro" id="IPR013848">
    <property type="entry name" value="Methylthiotransferase_N"/>
</dbReference>
<dbReference type="InterPro" id="IPR038135">
    <property type="entry name" value="Methylthiotransferase_N_sf"/>
</dbReference>
<dbReference type="InterPro" id="IPR006467">
    <property type="entry name" value="MiaB-like_bact"/>
</dbReference>
<dbReference type="InterPro" id="IPR007197">
    <property type="entry name" value="rSAM"/>
</dbReference>
<dbReference type="InterPro" id="IPR023404">
    <property type="entry name" value="rSAM_horseshoe"/>
</dbReference>
<dbReference type="NCBIfam" id="TIGR01579">
    <property type="entry name" value="MiaB-like-C"/>
    <property type="match status" value="1"/>
</dbReference>
<dbReference type="NCBIfam" id="TIGR00089">
    <property type="entry name" value="MiaB/RimO family radical SAM methylthiotransferase"/>
    <property type="match status" value="1"/>
</dbReference>
<dbReference type="PANTHER" id="PTHR11918">
    <property type="entry name" value="RADICAL SAM PROTEINS"/>
    <property type="match status" value="1"/>
</dbReference>
<dbReference type="PANTHER" id="PTHR11918:SF45">
    <property type="entry name" value="THREONYLCARBAMOYLADENOSINE TRNA METHYLTHIOTRANSFERASE"/>
    <property type="match status" value="1"/>
</dbReference>
<dbReference type="Pfam" id="PF04055">
    <property type="entry name" value="Radical_SAM"/>
    <property type="match status" value="1"/>
</dbReference>
<dbReference type="Pfam" id="PF00919">
    <property type="entry name" value="UPF0004"/>
    <property type="match status" value="1"/>
</dbReference>
<dbReference type="SFLD" id="SFLDG01082">
    <property type="entry name" value="B12-binding_domain_containing"/>
    <property type="match status" value="1"/>
</dbReference>
<dbReference type="SFLD" id="SFLDG01061">
    <property type="entry name" value="methylthiotransferase"/>
    <property type="match status" value="1"/>
</dbReference>
<dbReference type="SFLD" id="SFLDS00029">
    <property type="entry name" value="Radical_SAM"/>
    <property type="match status" value="1"/>
</dbReference>
<dbReference type="SMART" id="SM00729">
    <property type="entry name" value="Elp3"/>
    <property type="match status" value="1"/>
</dbReference>
<dbReference type="SUPFAM" id="SSF102114">
    <property type="entry name" value="Radical SAM enzymes"/>
    <property type="match status" value="1"/>
</dbReference>
<dbReference type="PROSITE" id="PS51449">
    <property type="entry name" value="MTTASE_N"/>
    <property type="match status" value="1"/>
</dbReference>
<dbReference type="PROSITE" id="PS01278">
    <property type="entry name" value="MTTASE_RADICAL"/>
    <property type="match status" value="1"/>
</dbReference>
<dbReference type="PROSITE" id="PS51918">
    <property type="entry name" value="RADICAL_SAM"/>
    <property type="match status" value="1"/>
</dbReference>
<name>MTAB_AQUAE</name>
<protein>
    <recommendedName>
        <fullName>Threonylcarbamoyladenosine tRNA methylthiotransferase MtaB</fullName>
        <ecNumber>2.8.4.5</ecNumber>
    </recommendedName>
    <alternativeName>
        <fullName>tRNA-t(6)A37 methylthiotransferase</fullName>
    </alternativeName>
</protein>
<proteinExistence type="inferred from homology"/>
<accession>O66772</accession>
<keyword id="KW-0004">4Fe-4S</keyword>
<keyword id="KW-0963">Cytoplasm</keyword>
<keyword id="KW-0408">Iron</keyword>
<keyword id="KW-0411">Iron-sulfur</keyword>
<keyword id="KW-0479">Metal-binding</keyword>
<keyword id="KW-1185">Reference proteome</keyword>
<keyword id="KW-0949">S-adenosyl-L-methionine</keyword>
<keyword id="KW-0808">Transferase</keyword>
<keyword id="KW-0819">tRNA processing</keyword>
<organism>
    <name type="scientific">Aquifex aeolicus (strain VF5)</name>
    <dbReference type="NCBI Taxonomy" id="224324"/>
    <lineage>
        <taxon>Bacteria</taxon>
        <taxon>Pseudomonadati</taxon>
        <taxon>Aquificota</taxon>
        <taxon>Aquificia</taxon>
        <taxon>Aquificales</taxon>
        <taxon>Aquificaceae</taxon>
        <taxon>Aquifex</taxon>
    </lineage>
</organism>